<evidence type="ECO:0000250" key="1"/>
<evidence type="ECO:0000255" key="2">
    <source>
        <dbReference type="PROSITE-ProRule" id="PRU00156"/>
    </source>
</evidence>
<evidence type="ECO:0000305" key="3"/>
<sequence length="370" mass="40748">MSDKLNRPKVFFDISADGKPKGRVVFELYNDVVPKTAENFRALCTGEKGASESSGKQLHYKGSIFHRIIKDFMCQGGDFTHGSGIGGESIYGEKFEDENFQLTHDKPFLLSMANAGANTNGSQFFITTVPTPHLNGKHVVFGEVIQGKSIVRQLERCDKGENDKPVEDWIISDCGELPSDYVPVPTSVDDGTGDIYEEVMADDDNINVNDPESVFKAVTTLKDIGTKQLKDGNVAAAYEKYNKASGFLNDYFPEDLSEENLSKLHALKLSCYLNAALVALKLKDGKKTINAASNALEVEAIDDKSKTKALYRKGMGYLLAKDEESAQKSLEEALQLSPEDGAIIKGLQDVKTTIKARRDKQKKAMSKFFS</sequence>
<organism>
    <name type="scientific">Debaryomyces hansenii (strain ATCC 36239 / CBS 767 / BCRC 21394 / JCM 1990 / NBRC 0083 / IGC 2968)</name>
    <name type="common">Yeast</name>
    <name type="synonym">Torulaspora hansenii</name>
    <dbReference type="NCBI Taxonomy" id="284592"/>
    <lineage>
        <taxon>Eukaryota</taxon>
        <taxon>Fungi</taxon>
        <taxon>Dikarya</taxon>
        <taxon>Ascomycota</taxon>
        <taxon>Saccharomycotina</taxon>
        <taxon>Pichiomycetes</taxon>
        <taxon>Debaryomycetaceae</taxon>
        <taxon>Debaryomyces</taxon>
    </lineage>
</organism>
<keyword id="KW-0963">Cytoplasm</keyword>
<keyword id="KW-0413">Isomerase</keyword>
<keyword id="KW-1185">Reference proteome</keyword>
<keyword id="KW-0677">Repeat</keyword>
<keyword id="KW-0697">Rotamase</keyword>
<keyword id="KW-0802">TPR repeat</keyword>
<gene>
    <name type="primary">CPR6</name>
    <name type="ordered locus">DEHA2A13640g</name>
</gene>
<name>PPID_DEBHA</name>
<protein>
    <recommendedName>
        <fullName>Peptidyl-prolyl cis-trans isomerase D</fullName>
        <shortName>PPIase D</shortName>
        <ecNumber>5.2.1.8</ecNumber>
    </recommendedName>
    <alternativeName>
        <fullName>Rotamase D</fullName>
    </alternativeName>
</protein>
<dbReference type="EC" id="5.2.1.8"/>
<dbReference type="EMBL" id="CR382133">
    <property type="protein sequence ID" value="CAG84900.1"/>
    <property type="molecule type" value="Genomic_DNA"/>
</dbReference>
<dbReference type="RefSeq" id="XP_456922.1">
    <property type="nucleotide sequence ID" value="XM_456922.1"/>
</dbReference>
<dbReference type="SMR" id="Q6BXZ7"/>
<dbReference type="FunCoup" id="Q6BXZ7">
    <property type="interactions" value="1141"/>
</dbReference>
<dbReference type="STRING" id="284592.Q6BXZ7"/>
<dbReference type="GeneID" id="2899475"/>
<dbReference type="KEGG" id="dha:DEHA2A13640g"/>
<dbReference type="VEuPathDB" id="FungiDB:DEHA2A13640g"/>
<dbReference type="eggNOG" id="KOG0546">
    <property type="taxonomic scope" value="Eukaryota"/>
</dbReference>
<dbReference type="HOGENOM" id="CLU_012062_37_0_1"/>
<dbReference type="InParanoid" id="Q6BXZ7"/>
<dbReference type="OMA" id="EMEQNCN"/>
<dbReference type="OrthoDB" id="193499at2759"/>
<dbReference type="Proteomes" id="UP000000599">
    <property type="component" value="Chromosome A"/>
</dbReference>
<dbReference type="GO" id="GO:0005737">
    <property type="term" value="C:cytoplasm"/>
    <property type="evidence" value="ECO:0007669"/>
    <property type="project" value="UniProtKB-SubCell"/>
</dbReference>
<dbReference type="GO" id="GO:0043231">
    <property type="term" value="C:intracellular membrane-bounded organelle"/>
    <property type="evidence" value="ECO:0007669"/>
    <property type="project" value="TreeGrafter"/>
</dbReference>
<dbReference type="GO" id="GO:0016018">
    <property type="term" value="F:cyclosporin A binding"/>
    <property type="evidence" value="ECO:0007669"/>
    <property type="project" value="TreeGrafter"/>
</dbReference>
<dbReference type="GO" id="GO:0003755">
    <property type="term" value="F:peptidyl-prolyl cis-trans isomerase activity"/>
    <property type="evidence" value="ECO:0007669"/>
    <property type="project" value="UniProtKB-KW"/>
</dbReference>
<dbReference type="GO" id="GO:0043022">
    <property type="term" value="F:ribosome binding"/>
    <property type="evidence" value="ECO:0007669"/>
    <property type="project" value="EnsemblFungi"/>
</dbReference>
<dbReference type="GO" id="GO:0051082">
    <property type="term" value="F:unfolded protein binding"/>
    <property type="evidence" value="ECO:0007669"/>
    <property type="project" value="EnsemblFungi"/>
</dbReference>
<dbReference type="GO" id="GO:0042026">
    <property type="term" value="P:protein refolding"/>
    <property type="evidence" value="ECO:0007669"/>
    <property type="project" value="EnsemblFungi"/>
</dbReference>
<dbReference type="CDD" id="cd01926">
    <property type="entry name" value="cyclophilin_ABH_like"/>
    <property type="match status" value="1"/>
</dbReference>
<dbReference type="FunFam" id="2.40.100.10:FF:000009">
    <property type="entry name" value="Peptidyl-prolyl cis-trans isomerase D"/>
    <property type="match status" value="1"/>
</dbReference>
<dbReference type="FunFam" id="1.25.40.10:FF:000029">
    <property type="entry name" value="peptidyl-prolyl cis-trans isomerase D"/>
    <property type="match status" value="1"/>
</dbReference>
<dbReference type="Gene3D" id="2.40.100.10">
    <property type="entry name" value="Cyclophilin-like"/>
    <property type="match status" value="1"/>
</dbReference>
<dbReference type="Gene3D" id="1.25.40.10">
    <property type="entry name" value="Tetratricopeptide repeat domain"/>
    <property type="match status" value="1"/>
</dbReference>
<dbReference type="InterPro" id="IPR029000">
    <property type="entry name" value="Cyclophilin-like_dom_sf"/>
</dbReference>
<dbReference type="InterPro" id="IPR020892">
    <property type="entry name" value="Cyclophilin-type_PPIase_CS"/>
</dbReference>
<dbReference type="InterPro" id="IPR002130">
    <property type="entry name" value="Cyclophilin-type_PPIase_dom"/>
</dbReference>
<dbReference type="InterPro" id="IPR011990">
    <property type="entry name" value="TPR-like_helical_dom_sf"/>
</dbReference>
<dbReference type="InterPro" id="IPR019734">
    <property type="entry name" value="TPR_rpt"/>
</dbReference>
<dbReference type="PANTHER" id="PTHR11071">
    <property type="entry name" value="PEPTIDYL-PROLYL CIS-TRANS ISOMERASE"/>
    <property type="match status" value="1"/>
</dbReference>
<dbReference type="PANTHER" id="PTHR11071:SF561">
    <property type="entry name" value="PEPTIDYL-PROLYL CIS-TRANS ISOMERASE D-RELATED"/>
    <property type="match status" value="1"/>
</dbReference>
<dbReference type="Pfam" id="PF00160">
    <property type="entry name" value="Pro_isomerase"/>
    <property type="match status" value="1"/>
</dbReference>
<dbReference type="PRINTS" id="PR00153">
    <property type="entry name" value="CSAPPISMRASE"/>
</dbReference>
<dbReference type="SMART" id="SM00028">
    <property type="entry name" value="TPR"/>
    <property type="match status" value="3"/>
</dbReference>
<dbReference type="SUPFAM" id="SSF50891">
    <property type="entry name" value="Cyclophilin-like"/>
    <property type="match status" value="1"/>
</dbReference>
<dbReference type="SUPFAM" id="SSF48452">
    <property type="entry name" value="TPR-like"/>
    <property type="match status" value="1"/>
</dbReference>
<dbReference type="PROSITE" id="PS00170">
    <property type="entry name" value="CSA_PPIASE_1"/>
    <property type="match status" value="1"/>
</dbReference>
<dbReference type="PROSITE" id="PS50072">
    <property type="entry name" value="CSA_PPIASE_2"/>
    <property type="match status" value="1"/>
</dbReference>
<dbReference type="PROSITE" id="PS50005">
    <property type="entry name" value="TPR"/>
    <property type="match status" value="1"/>
</dbReference>
<dbReference type="PROSITE" id="PS50293">
    <property type="entry name" value="TPR_REGION"/>
    <property type="match status" value="1"/>
</dbReference>
<accession>Q6BXZ7</accession>
<comment type="function">
    <text evidence="1">PPIases accelerate the folding of proteins. It catalyzes the cis-trans isomerization of proline imidic peptide bonds in oligopeptides (By similarity).</text>
</comment>
<comment type="catalytic activity">
    <reaction>
        <text>[protein]-peptidylproline (omega=180) = [protein]-peptidylproline (omega=0)</text>
        <dbReference type="Rhea" id="RHEA:16237"/>
        <dbReference type="Rhea" id="RHEA-COMP:10747"/>
        <dbReference type="Rhea" id="RHEA-COMP:10748"/>
        <dbReference type="ChEBI" id="CHEBI:83833"/>
        <dbReference type="ChEBI" id="CHEBI:83834"/>
        <dbReference type="EC" id="5.2.1.8"/>
    </reaction>
</comment>
<comment type="subcellular location">
    <subcellularLocation>
        <location evidence="1">Cytoplasm</location>
    </subcellularLocation>
</comment>
<comment type="similarity">
    <text evidence="3">Belongs to the cyclophilin-type PPIase family. PPIase D subfamily.</text>
</comment>
<reference key="1">
    <citation type="journal article" date="2004" name="Nature">
        <title>Genome evolution in yeasts.</title>
        <authorList>
            <person name="Dujon B."/>
            <person name="Sherman D."/>
            <person name="Fischer G."/>
            <person name="Durrens P."/>
            <person name="Casaregola S."/>
            <person name="Lafontaine I."/>
            <person name="de Montigny J."/>
            <person name="Marck C."/>
            <person name="Neuveglise C."/>
            <person name="Talla E."/>
            <person name="Goffard N."/>
            <person name="Frangeul L."/>
            <person name="Aigle M."/>
            <person name="Anthouard V."/>
            <person name="Babour A."/>
            <person name="Barbe V."/>
            <person name="Barnay S."/>
            <person name="Blanchin S."/>
            <person name="Beckerich J.-M."/>
            <person name="Beyne E."/>
            <person name="Bleykasten C."/>
            <person name="Boisrame A."/>
            <person name="Boyer J."/>
            <person name="Cattolico L."/>
            <person name="Confanioleri F."/>
            <person name="de Daruvar A."/>
            <person name="Despons L."/>
            <person name="Fabre E."/>
            <person name="Fairhead C."/>
            <person name="Ferry-Dumazet H."/>
            <person name="Groppi A."/>
            <person name="Hantraye F."/>
            <person name="Hennequin C."/>
            <person name="Jauniaux N."/>
            <person name="Joyet P."/>
            <person name="Kachouri R."/>
            <person name="Kerrest A."/>
            <person name="Koszul R."/>
            <person name="Lemaire M."/>
            <person name="Lesur I."/>
            <person name="Ma L."/>
            <person name="Muller H."/>
            <person name="Nicaud J.-M."/>
            <person name="Nikolski M."/>
            <person name="Oztas S."/>
            <person name="Ozier-Kalogeropoulos O."/>
            <person name="Pellenz S."/>
            <person name="Potier S."/>
            <person name="Richard G.-F."/>
            <person name="Straub M.-L."/>
            <person name="Suleau A."/>
            <person name="Swennen D."/>
            <person name="Tekaia F."/>
            <person name="Wesolowski-Louvel M."/>
            <person name="Westhof E."/>
            <person name="Wirth B."/>
            <person name="Zeniou-Meyer M."/>
            <person name="Zivanovic Y."/>
            <person name="Bolotin-Fukuhara M."/>
            <person name="Thierry A."/>
            <person name="Bouchier C."/>
            <person name="Caudron B."/>
            <person name="Scarpelli C."/>
            <person name="Gaillardin C."/>
            <person name="Weissenbach J."/>
            <person name="Wincker P."/>
            <person name="Souciet J.-L."/>
        </authorList>
    </citation>
    <scope>NUCLEOTIDE SEQUENCE [LARGE SCALE GENOMIC DNA]</scope>
    <source>
        <strain>ATCC 36239 / CBS 767 / BCRC 21394 / JCM 1990 / NBRC 0083 / IGC 2968</strain>
    </source>
</reference>
<feature type="chain" id="PRO_0000232947" description="Peptidyl-prolyl cis-trans isomerase D">
    <location>
        <begin position="1"/>
        <end position="370"/>
    </location>
</feature>
<feature type="domain" description="PPIase cyclophilin-type" evidence="2">
    <location>
        <begin position="11"/>
        <end position="176"/>
    </location>
</feature>
<feature type="repeat" description="TPR 1">
    <location>
        <begin position="218"/>
        <end position="251"/>
    </location>
</feature>
<feature type="repeat" description="TPR 2">
    <location>
        <begin position="269"/>
        <end position="302"/>
    </location>
</feature>
<feature type="repeat" description="TPR 3">
    <location>
        <begin position="307"/>
        <end position="340"/>
    </location>
</feature>
<proteinExistence type="inferred from homology"/>